<feature type="signal peptide" evidence="3">
    <location>
        <begin position="1"/>
        <end position="18"/>
    </location>
</feature>
<feature type="chain" id="PRO_0000017931" description="Major urinary protein 5" evidence="3">
    <location>
        <begin position="19"/>
        <end position="180"/>
    </location>
</feature>
<feature type="disulfide bond" evidence="1">
    <location>
        <begin position="82"/>
        <end position="175"/>
    </location>
</feature>
<feature type="sequence conflict" description="In Ref. 1; AAA39770, 4; EDL31167 and 5; AAI32311/AAI32313." evidence="5" ref="1 4 5">
    <original>Y</original>
    <variation>C</variation>
    <location>
        <position position="15"/>
    </location>
</feature>
<feature type="sequence conflict" description="In Ref. 1; AAA39770, 4; EDL31167 and 5; AAI32311/AAI32313." evidence="5" ref="1 4 5">
    <original>G</original>
    <variation>R</variation>
    <location>
        <position position="25"/>
    </location>
</feature>
<feature type="sequence conflict" description="In Ref. 1; AAA39770, 4; EDL31167 and 5; AAI32311/AAI32313." evidence="5" ref="1 4 5">
    <original>L</original>
    <variation>F</variation>
    <location>
        <position position="28"/>
    </location>
</feature>
<protein>
    <recommendedName>
        <fullName evidence="8">Major urinary protein 5</fullName>
    </recommendedName>
</protein>
<name>MUP5_MOUSE</name>
<organism>
    <name type="scientific">Mus musculus</name>
    <name type="common">Mouse</name>
    <dbReference type="NCBI Taxonomy" id="10090"/>
    <lineage>
        <taxon>Eukaryota</taxon>
        <taxon>Metazoa</taxon>
        <taxon>Chordata</taxon>
        <taxon>Craniata</taxon>
        <taxon>Vertebrata</taxon>
        <taxon>Euteleostomi</taxon>
        <taxon>Mammalia</taxon>
        <taxon>Eutheria</taxon>
        <taxon>Euarchontoglires</taxon>
        <taxon>Glires</taxon>
        <taxon>Rodentia</taxon>
        <taxon>Myomorpha</taxon>
        <taxon>Muroidea</taxon>
        <taxon>Muridae</taxon>
        <taxon>Murinae</taxon>
        <taxon>Mus</taxon>
        <taxon>Mus</taxon>
    </lineage>
</organism>
<proteinExistence type="evidence at transcript level"/>
<dbReference type="EMBL" id="M16360">
    <property type="protein sequence ID" value="AAA39770.1"/>
    <property type="molecule type" value="mRNA"/>
</dbReference>
<dbReference type="EMBL" id="EU882233">
    <property type="protein sequence ID" value="ACF70717.1"/>
    <property type="molecule type" value="mRNA"/>
</dbReference>
<dbReference type="EMBL" id="CT990634">
    <property type="protein sequence ID" value="CAQ12473.1"/>
    <property type="molecule type" value="Genomic_DNA"/>
</dbReference>
<dbReference type="EMBL" id="AL772344">
    <property type="status" value="NOT_ANNOTATED_CDS"/>
    <property type="molecule type" value="Genomic_DNA"/>
</dbReference>
<dbReference type="EMBL" id="CH466527">
    <property type="protein sequence ID" value="EDL31167.1"/>
    <property type="molecule type" value="Genomic_DNA"/>
</dbReference>
<dbReference type="EMBL" id="BC132310">
    <property type="protein sequence ID" value="AAI32311.1"/>
    <property type="molecule type" value="mRNA"/>
</dbReference>
<dbReference type="EMBL" id="BC132312">
    <property type="protein sequence ID" value="AAI32313.1"/>
    <property type="molecule type" value="mRNA"/>
</dbReference>
<dbReference type="EMBL" id="BK006671">
    <property type="protein sequence ID" value="DAA06314.1"/>
    <property type="molecule type" value="Genomic_DNA"/>
</dbReference>
<dbReference type="CCDS" id="CCDS18232.1"/>
<dbReference type="PIR" id="D26890">
    <property type="entry name" value="D26890"/>
</dbReference>
<dbReference type="RefSeq" id="NP_032675.2">
    <property type="nucleotide sequence ID" value="NM_008649.2"/>
</dbReference>
<dbReference type="SMR" id="P11591"/>
<dbReference type="FunCoup" id="P11591">
    <property type="interactions" value="313"/>
</dbReference>
<dbReference type="STRING" id="10090.ENSMUSP00000080908"/>
<dbReference type="Allergome" id="478">
    <property type="allergen name" value="Mus m 1"/>
</dbReference>
<dbReference type="PhosphoSitePlus" id="P11591"/>
<dbReference type="jPOST" id="P11591"/>
<dbReference type="PaxDb" id="10090-ENSMUSP00000080908"/>
<dbReference type="ProteomicsDB" id="286087"/>
<dbReference type="DNASU" id="17844"/>
<dbReference type="Ensembl" id="ENSMUST00000082287.3">
    <property type="protein sequence ID" value="ENSMUSP00000080908.3"/>
    <property type="gene ID" value="ENSMUSG00000058523.3"/>
</dbReference>
<dbReference type="GeneID" id="17844"/>
<dbReference type="KEGG" id="mmu:17844"/>
<dbReference type="UCSC" id="uc008tbq.1">
    <property type="organism name" value="mouse"/>
</dbReference>
<dbReference type="AGR" id="MGI:104974"/>
<dbReference type="CTD" id="17844"/>
<dbReference type="MGI" id="MGI:104974">
    <property type="gene designation" value="Mup5"/>
</dbReference>
<dbReference type="VEuPathDB" id="HostDB:ENSMUSG00000058523"/>
<dbReference type="eggNOG" id="ENOG502S6GK">
    <property type="taxonomic scope" value="Eukaryota"/>
</dbReference>
<dbReference type="GeneTree" id="ENSGT01050000244868"/>
<dbReference type="InParanoid" id="P11591"/>
<dbReference type="OMA" id="QLYAREP"/>
<dbReference type="OrthoDB" id="9048943at2759"/>
<dbReference type="PhylomeDB" id="P11591"/>
<dbReference type="TreeFam" id="TF338197"/>
<dbReference type="BioGRID-ORCS" id="17844">
    <property type="hits" value="4 hits in 45 CRISPR screens"/>
</dbReference>
<dbReference type="ChiTaRS" id="Mup5">
    <property type="organism name" value="mouse"/>
</dbReference>
<dbReference type="PRO" id="PR:P11591"/>
<dbReference type="Proteomes" id="UP000000589">
    <property type="component" value="Chromosome 4"/>
</dbReference>
<dbReference type="RNAct" id="P11591">
    <property type="molecule type" value="protein"/>
</dbReference>
<dbReference type="Bgee" id="ENSMUSG00000058523">
    <property type="expression patterns" value="Expressed in olfactory epithelium and 39 other cell types or tissues"/>
</dbReference>
<dbReference type="GO" id="GO:0005829">
    <property type="term" value="C:cytosol"/>
    <property type="evidence" value="ECO:0000250"/>
    <property type="project" value="UniProtKB"/>
</dbReference>
<dbReference type="GO" id="GO:0005615">
    <property type="term" value="C:extracellular space"/>
    <property type="evidence" value="ECO:0000250"/>
    <property type="project" value="UniProtKB"/>
</dbReference>
<dbReference type="GO" id="GO:0005634">
    <property type="term" value="C:nucleus"/>
    <property type="evidence" value="ECO:0000250"/>
    <property type="project" value="UniProtKB"/>
</dbReference>
<dbReference type="GO" id="GO:0005009">
    <property type="term" value="F:insulin receptor activity"/>
    <property type="evidence" value="ECO:0000250"/>
    <property type="project" value="UniProtKB"/>
</dbReference>
<dbReference type="GO" id="GO:0005550">
    <property type="term" value="F:pheromone binding"/>
    <property type="evidence" value="ECO:0000250"/>
    <property type="project" value="UniProtKB"/>
</dbReference>
<dbReference type="GO" id="GO:0036094">
    <property type="term" value="F:small molecule binding"/>
    <property type="evidence" value="ECO:0007669"/>
    <property type="project" value="InterPro"/>
</dbReference>
<dbReference type="GO" id="GO:0009060">
    <property type="term" value="P:aerobic respiration"/>
    <property type="evidence" value="ECO:0000250"/>
    <property type="project" value="UniProtKB"/>
</dbReference>
<dbReference type="GO" id="GO:0071396">
    <property type="term" value="P:cellular response to lipid"/>
    <property type="evidence" value="ECO:0000250"/>
    <property type="project" value="UniProtKB"/>
</dbReference>
<dbReference type="GO" id="GO:0006112">
    <property type="term" value="P:energy reserve metabolic process"/>
    <property type="evidence" value="ECO:0000250"/>
    <property type="project" value="UniProtKB"/>
</dbReference>
<dbReference type="GO" id="GO:0042593">
    <property type="term" value="P:glucose homeostasis"/>
    <property type="evidence" value="ECO:0000250"/>
    <property type="project" value="UniProtKB"/>
</dbReference>
<dbReference type="GO" id="GO:0031649">
    <property type="term" value="P:heat generation"/>
    <property type="evidence" value="ECO:0000250"/>
    <property type="project" value="UniProtKB"/>
</dbReference>
<dbReference type="GO" id="GO:0045475">
    <property type="term" value="P:locomotor rhythm"/>
    <property type="evidence" value="ECO:0000250"/>
    <property type="project" value="UniProtKB"/>
</dbReference>
<dbReference type="GO" id="GO:0007005">
    <property type="term" value="P:mitochondrion organization"/>
    <property type="evidence" value="ECO:0000250"/>
    <property type="project" value="UniProtKB"/>
</dbReference>
<dbReference type="GO" id="GO:0045892">
    <property type="term" value="P:negative regulation of DNA-templated transcription"/>
    <property type="evidence" value="ECO:0000250"/>
    <property type="project" value="UniProtKB"/>
</dbReference>
<dbReference type="GO" id="GO:0045721">
    <property type="term" value="P:negative regulation of gluconeogenesis"/>
    <property type="evidence" value="ECO:0000250"/>
    <property type="project" value="UniProtKB"/>
</dbReference>
<dbReference type="GO" id="GO:0061179">
    <property type="term" value="P:negative regulation of insulin secretion involved in cellular response to glucose stimulus"/>
    <property type="evidence" value="ECO:0000250"/>
    <property type="project" value="UniProtKB"/>
</dbReference>
<dbReference type="GO" id="GO:0051055">
    <property type="term" value="P:negative regulation of lipid biosynthetic process"/>
    <property type="evidence" value="ECO:0000250"/>
    <property type="project" value="UniProtKB"/>
</dbReference>
<dbReference type="GO" id="GO:0010888">
    <property type="term" value="P:negative regulation of lipid storage"/>
    <property type="evidence" value="ECO:0000250"/>
    <property type="project" value="UniProtKB"/>
</dbReference>
<dbReference type="GO" id="GO:0010628">
    <property type="term" value="P:positive regulation of gene expression"/>
    <property type="evidence" value="ECO:0000250"/>
    <property type="project" value="UniProtKB"/>
</dbReference>
<dbReference type="GO" id="GO:0010907">
    <property type="term" value="P:positive regulation of glucose metabolic process"/>
    <property type="evidence" value="ECO:0000250"/>
    <property type="project" value="UniProtKB"/>
</dbReference>
<dbReference type="GO" id="GO:0045834">
    <property type="term" value="P:positive regulation of lipid metabolic process"/>
    <property type="evidence" value="ECO:0000250"/>
    <property type="project" value="UniProtKB"/>
</dbReference>
<dbReference type="GO" id="GO:0051897">
    <property type="term" value="P:positive regulation of phosphatidylinositol 3-kinase/protein kinase B signal transduction"/>
    <property type="evidence" value="ECO:0000250"/>
    <property type="project" value="UniProtKB"/>
</dbReference>
<dbReference type="CDD" id="cd19428">
    <property type="entry name" value="lipocalin_MUP-like"/>
    <property type="match status" value="1"/>
</dbReference>
<dbReference type="FunFam" id="2.40.128.20:FF:000008">
    <property type="entry name" value="Major urinary protein"/>
    <property type="match status" value="1"/>
</dbReference>
<dbReference type="Gene3D" id="2.40.128.20">
    <property type="match status" value="1"/>
</dbReference>
<dbReference type="InterPro" id="IPR012674">
    <property type="entry name" value="Calycin"/>
</dbReference>
<dbReference type="InterPro" id="IPR002345">
    <property type="entry name" value="Lipocalin"/>
</dbReference>
<dbReference type="InterPro" id="IPR022272">
    <property type="entry name" value="Lipocalin_CS"/>
</dbReference>
<dbReference type="InterPro" id="IPR000566">
    <property type="entry name" value="Lipocln_cytosolic_FA-bd_dom"/>
</dbReference>
<dbReference type="InterPro" id="IPR002971">
    <property type="entry name" value="Maj_urinary"/>
</dbReference>
<dbReference type="PANTHER" id="PTHR11430">
    <property type="entry name" value="LIPOCALIN"/>
    <property type="match status" value="1"/>
</dbReference>
<dbReference type="PANTHER" id="PTHR11430:SF76">
    <property type="entry name" value="MAJOR URINARY PROTEIN 1-RELATED"/>
    <property type="match status" value="1"/>
</dbReference>
<dbReference type="Pfam" id="PF00061">
    <property type="entry name" value="Lipocalin"/>
    <property type="match status" value="1"/>
</dbReference>
<dbReference type="PRINTS" id="PR00179">
    <property type="entry name" value="LIPOCALIN"/>
</dbReference>
<dbReference type="PRINTS" id="PR01221">
    <property type="entry name" value="MAJORURINARY"/>
</dbReference>
<dbReference type="SUPFAM" id="SSF50814">
    <property type="entry name" value="Lipocalins"/>
    <property type="match status" value="1"/>
</dbReference>
<dbReference type="PROSITE" id="PS00213">
    <property type="entry name" value="LIPOCALIN"/>
    <property type="match status" value="1"/>
</dbReference>
<sequence>MKLLLLLCLELTLVYVHAEEASSEGQNLNVEKINGKWFSILLASDKREKIEEHGTMRVFVEHIDVLENSLAFKFHTVIDEECTEIYLVADKTEKAGEYSVTYDGFNTFTILKTDYDNYIMFHLINKKDEENFQLMELFGREPDLSSDIKEKFAKLCEEHGIVRENIIDLSNANRCLQARE</sequence>
<evidence type="ECO:0000250" key="1">
    <source>
        <dbReference type="UniProtKB" id="P11590"/>
    </source>
</evidence>
<evidence type="ECO:0000250" key="2">
    <source>
        <dbReference type="UniProtKB" id="Q5FW60"/>
    </source>
</evidence>
<evidence type="ECO:0000255" key="3"/>
<evidence type="ECO:0000303" key="4">
    <source>
    </source>
</evidence>
<evidence type="ECO:0000305" key="5"/>
<evidence type="ECO:0000312" key="6">
    <source>
        <dbReference type="EMBL" id="AAI32311.1"/>
    </source>
</evidence>
<evidence type="ECO:0000312" key="7">
    <source>
        <dbReference type="EMBL" id="ACF70717.1"/>
    </source>
</evidence>
<evidence type="ECO:0000312" key="8">
    <source>
        <dbReference type="MGI" id="MGI:104974"/>
    </source>
</evidence>
<keyword id="KW-0085">Behavior</keyword>
<keyword id="KW-1015">Disulfide bond</keyword>
<keyword id="KW-0590">Pheromone-binding</keyword>
<keyword id="KW-1185">Reference proteome</keyword>
<keyword id="KW-0964">Secreted</keyword>
<keyword id="KW-0732">Signal</keyword>
<keyword id="KW-0813">Transport</keyword>
<accession>P11591</accession>
<accession>A2RSZ7</accession>
<accession>B5TE77</accession>
<reference key="1">
    <citation type="journal article" date="1987" name="Mol. Cell. Biol.">
        <title>Nucleotide sequences of liver, lachrymal, and submaxillary gland mouse major urinary protein mRNAs: mosaic structure and construction of panels of gene-specific synthetic oligonucleotide probes.</title>
        <authorList>
            <person name="Shahan K."/>
            <person name="Gilmartin M."/>
            <person name="Derman E."/>
        </authorList>
    </citation>
    <scope>NUCLEOTIDE SEQUENCE [MRNA]</scope>
    <source>
        <strain>BALB/cJ</strain>
        <tissue>Liver</tissue>
    </source>
</reference>
<reference key="2">
    <citation type="journal article" date="2008" name="PLoS ONE">
        <title>Species specificity in major urinary proteins by parallel evolution.</title>
        <authorList>
            <person name="Logan D.W."/>
            <person name="Marton T.F."/>
            <person name="Stowers L."/>
        </authorList>
    </citation>
    <scope>NUCLEOTIDE SEQUENCE [MRNA]</scope>
    <source>
        <strain evidence="7">C57BL/6J</strain>
        <tissue evidence="7">Submandibular gland</tissue>
    </source>
</reference>
<reference key="3">
    <citation type="journal article" date="2009" name="PLoS Biol.">
        <title>Lineage-specific biology revealed by a finished genome assembly of the mouse.</title>
        <authorList>
            <person name="Church D.M."/>
            <person name="Goodstadt L."/>
            <person name="Hillier L.W."/>
            <person name="Zody M.C."/>
            <person name="Goldstein S."/>
            <person name="She X."/>
            <person name="Bult C.J."/>
            <person name="Agarwala R."/>
            <person name="Cherry J.L."/>
            <person name="DiCuccio M."/>
            <person name="Hlavina W."/>
            <person name="Kapustin Y."/>
            <person name="Meric P."/>
            <person name="Maglott D."/>
            <person name="Birtle Z."/>
            <person name="Marques A.C."/>
            <person name="Graves T."/>
            <person name="Zhou S."/>
            <person name="Teague B."/>
            <person name="Potamousis K."/>
            <person name="Churas C."/>
            <person name="Place M."/>
            <person name="Herschleb J."/>
            <person name="Runnheim R."/>
            <person name="Forrest D."/>
            <person name="Amos-Landgraf J."/>
            <person name="Schwartz D.C."/>
            <person name="Cheng Z."/>
            <person name="Lindblad-Toh K."/>
            <person name="Eichler E.E."/>
            <person name="Ponting C.P."/>
        </authorList>
    </citation>
    <scope>NUCLEOTIDE SEQUENCE [LARGE SCALE GENOMIC DNA]</scope>
    <source>
        <strain>C57BL/6J</strain>
    </source>
</reference>
<reference key="4">
    <citation type="submission" date="2005-09" db="EMBL/GenBank/DDBJ databases">
        <authorList>
            <person name="Mural R.J."/>
            <person name="Adams M.D."/>
            <person name="Myers E.W."/>
            <person name="Smith H.O."/>
            <person name="Venter J.C."/>
        </authorList>
    </citation>
    <scope>NUCLEOTIDE SEQUENCE [LARGE SCALE GENOMIC DNA]</scope>
</reference>
<reference key="5">
    <citation type="journal article" date="2004" name="Genome Res.">
        <title>The status, quality, and expansion of the NIH full-length cDNA project: the Mammalian Gene Collection (MGC).</title>
        <authorList>
            <consortium name="The MGC Project Team"/>
        </authorList>
    </citation>
    <scope>NUCLEOTIDE SEQUENCE [LARGE SCALE MRNA]</scope>
    <source>
        <tissue evidence="6">Brain</tissue>
    </source>
</reference>
<comment type="function">
    <text evidence="5">Major urinary proteins (Mups) bind pheromones, and thus stabilize them to allow slow release into the air from urine marks. May protect pheromones from oxidation. May also act as pheromones themselves. In this context, they play a role in the regulation of social behaviors, such as aggression, mating, pup-suckling, territory establishment and dominance.</text>
</comment>
<comment type="subcellular location">
    <subcellularLocation>
        <location evidence="2">Secreted</location>
    </subcellularLocation>
</comment>
<comment type="similarity">
    <text evidence="5">Belongs to the calycin superfamily. Lipocalin family.</text>
</comment>
<gene>
    <name evidence="8" type="primary">Mup5</name>
    <name evidence="4" type="synonym">Mup18</name>
</gene>